<name>PXPA_ECO27</name>
<protein>
    <recommendedName>
        <fullName evidence="1">5-oxoprolinase subunit A</fullName>
        <shortName evidence="1">5-OPase subunit A</shortName>
        <ecNumber evidence="1">3.5.2.9</ecNumber>
    </recommendedName>
    <alternativeName>
        <fullName evidence="1">5-oxoprolinase (ATP-hydrolyzing) subunit A</fullName>
    </alternativeName>
</protein>
<sequence>MKIDLNADLGEGCASDAELLTLVSSANIACGFHAGDAQTMQACVREAIKNGVAIGAHPSFPDRENFGRSAMQLPPETVFAQTLYQIGALAAITRAQGGVMCHVKPHGMLYNQAAKEAQLADAIARAVYACDPALILVGLAGSELIRAGERYGLVTREEVFADRGYQADGSLVPRSQPGALIENEEQALAQTLEMVQYGRVKSITGEWAMVTAQTVCLHGDGEHALAFARRLRATFAEKGIVVAA</sequence>
<feature type="chain" id="PRO_1000200458" description="5-oxoprolinase subunit A">
    <location>
        <begin position="1"/>
        <end position="244"/>
    </location>
</feature>
<organism>
    <name type="scientific">Escherichia coli O127:H6 (strain E2348/69 / EPEC)</name>
    <dbReference type="NCBI Taxonomy" id="574521"/>
    <lineage>
        <taxon>Bacteria</taxon>
        <taxon>Pseudomonadati</taxon>
        <taxon>Pseudomonadota</taxon>
        <taxon>Gammaproteobacteria</taxon>
        <taxon>Enterobacterales</taxon>
        <taxon>Enterobacteriaceae</taxon>
        <taxon>Escherichia</taxon>
    </lineage>
</organism>
<dbReference type="EC" id="3.5.2.9" evidence="1"/>
<dbReference type="EMBL" id="FM180568">
    <property type="protein sequence ID" value="CAS08144.1"/>
    <property type="molecule type" value="Genomic_DNA"/>
</dbReference>
<dbReference type="RefSeq" id="WP_000687123.1">
    <property type="nucleotide sequence ID" value="NC_011601.1"/>
</dbReference>
<dbReference type="SMR" id="B7UKY6"/>
<dbReference type="KEGG" id="ecg:E2348C_0596"/>
<dbReference type="HOGENOM" id="CLU_069535_0_0_6"/>
<dbReference type="Proteomes" id="UP000008205">
    <property type="component" value="Chromosome"/>
</dbReference>
<dbReference type="GO" id="GO:0017168">
    <property type="term" value="F:5-oxoprolinase (ATP-hydrolyzing) activity"/>
    <property type="evidence" value="ECO:0007669"/>
    <property type="project" value="UniProtKB-UniRule"/>
</dbReference>
<dbReference type="GO" id="GO:0005524">
    <property type="term" value="F:ATP binding"/>
    <property type="evidence" value="ECO:0007669"/>
    <property type="project" value="UniProtKB-UniRule"/>
</dbReference>
<dbReference type="GO" id="GO:0005975">
    <property type="term" value="P:carbohydrate metabolic process"/>
    <property type="evidence" value="ECO:0007669"/>
    <property type="project" value="InterPro"/>
</dbReference>
<dbReference type="CDD" id="cd10800">
    <property type="entry name" value="LamB_YcsF_YbgL_like"/>
    <property type="match status" value="1"/>
</dbReference>
<dbReference type="Gene3D" id="3.20.20.370">
    <property type="entry name" value="Glycoside hydrolase/deacetylase"/>
    <property type="match status" value="1"/>
</dbReference>
<dbReference type="HAMAP" id="MF_00691">
    <property type="entry name" value="PxpA"/>
    <property type="match status" value="1"/>
</dbReference>
<dbReference type="InterPro" id="IPR011330">
    <property type="entry name" value="Glyco_hydro/deAcase_b/a-brl"/>
</dbReference>
<dbReference type="InterPro" id="IPR005501">
    <property type="entry name" value="LamB/YcsF/PxpA-like"/>
</dbReference>
<dbReference type="NCBIfam" id="NF003812">
    <property type="entry name" value="PRK05406.1-1"/>
    <property type="match status" value="1"/>
</dbReference>
<dbReference type="NCBIfam" id="NF003814">
    <property type="entry name" value="PRK05406.1-3"/>
    <property type="match status" value="1"/>
</dbReference>
<dbReference type="NCBIfam" id="NF003815">
    <property type="entry name" value="PRK05406.1-4"/>
    <property type="match status" value="1"/>
</dbReference>
<dbReference type="NCBIfam" id="NF003816">
    <property type="entry name" value="PRK05406.1-5"/>
    <property type="match status" value="1"/>
</dbReference>
<dbReference type="PANTHER" id="PTHR30292:SF0">
    <property type="entry name" value="5-OXOPROLINASE SUBUNIT A"/>
    <property type="match status" value="1"/>
</dbReference>
<dbReference type="PANTHER" id="PTHR30292">
    <property type="entry name" value="UNCHARACTERIZED PROTEIN YBGL-RELATED"/>
    <property type="match status" value="1"/>
</dbReference>
<dbReference type="Pfam" id="PF03746">
    <property type="entry name" value="LamB_YcsF"/>
    <property type="match status" value="1"/>
</dbReference>
<dbReference type="SUPFAM" id="SSF88713">
    <property type="entry name" value="Glycoside hydrolase/deacetylase"/>
    <property type="match status" value="1"/>
</dbReference>
<keyword id="KW-0067">ATP-binding</keyword>
<keyword id="KW-0378">Hydrolase</keyword>
<keyword id="KW-0547">Nucleotide-binding</keyword>
<keyword id="KW-1185">Reference proteome</keyword>
<reference key="1">
    <citation type="journal article" date="2009" name="J. Bacteriol.">
        <title>Complete genome sequence and comparative genome analysis of enteropathogenic Escherichia coli O127:H6 strain E2348/69.</title>
        <authorList>
            <person name="Iguchi A."/>
            <person name="Thomson N.R."/>
            <person name="Ogura Y."/>
            <person name="Saunders D."/>
            <person name="Ooka T."/>
            <person name="Henderson I.R."/>
            <person name="Harris D."/>
            <person name="Asadulghani M."/>
            <person name="Kurokawa K."/>
            <person name="Dean P."/>
            <person name="Kenny B."/>
            <person name="Quail M.A."/>
            <person name="Thurston S."/>
            <person name="Dougan G."/>
            <person name="Hayashi T."/>
            <person name="Parkhill J."/>
            <person name="Frankel G."/>
        </authorList>
    </citation>
    <scope>NUCLEOTIDE SEQUENCE [LARGE SCALE GENOMIC DNA]</scope>
    <source>
        <strain>E2348/69 / EPEC</strain>
    </source>
</reference>
<gene>
    <name evidence="1" type="primary">pxpA</name>
    <name type="ordered locus">E2348C_0596</name>
</gene>
<accession>B7UKY6</accession>
<comment type="function">
    <text evidence="1">Catalyzes the cleavage of 5-oxoproline to form L-glutamate coupled to the hydrolysis of ATP to ADP and inorganic phosphate.</text>
</comment>
<comment type="catalytic activity">
    <reaction evidence="1">
        <text>5-oxo-L-proline + ATP + 2 H2O = L-glutamate + ADP + phosphate + H(+)</text>
        <dbReference type="Rhea" id="RHEA:10348"/>
        <dbReference type="ChEBI" id="CHEBI:15377"/>
        <dbReference type="ChEBI" id="CHEBI:15378"/>
        <dbReference type="ChEBI" id="CHEBI:29985"/>
        <dbReference type="ChEBI" id="CHEBI:30616"/>
        <dbReference type="ChEBI" id="CHEBI:43474"/>
        <dbReference type="ChEBI" id="CHEBI:58402"/>
        <dbReference type="ChEBI" id="CHEBI:456216"/>
        <dbReference type="EC" id="3.5.2.9"/>
    </reaction>
</comment>
<comment type="subunit">
    <text evidence="1">Forms a complex composed of PxpA, PxpB and PxpC.</text>
</comment>
<comment type="similarity">
    <text evidence="1">Belongs to the LamB/PxpA family.</text>
</comment>
<proteinExistence type="inferred from homology"/>
<evidence type="ECO:0000255" key="1">
    <source>
        <dbReference type="HAMAP-Rule" id="MF_00691"/>
    </source>
</evidence>